<comment type="function">
    <text evidence="1">Dirigent proteins impart stereoselectivity on the phenoxy radical-coupling reaction, yielding optically active lignans from two molecules of coniferyl alcohol in the biosynthesis of lignans, flavonolignans, and alkaloids and thus plays a central role in plant secondary metabolism.</text>
</comment>
<comment type="subunit">
    <text evidence="1">Homodimer.</text>
</comment>
<comment type="subcellular location">
    <subcellularLocation>
        <location evidence="1">Secreted</location>
        <location evidence="1">Extracellular space</location>
        <location evidence="1">Apoplast</location>
    </subcellularLocation>
</comment>
<comment type="alternative products">
    <event type="alternative splicing"/>
    <isoform>
        <id>F4J4N3-1</id>
        <name>1</name>
        <sequence type="displayed"/>
    </isoform>
    <isoform>
        <id>F4J4N3-2</id>
        <name>2</name>
        <sequence type="described" ref="VSP_047339"/>
    </isoform>
</comment>
<comment type="similarity">
    <text evidence="5">Belongs to the plant dirigent protein family.</text>
</comment>
<comment type="sequence caution" evidence="5">
    <conflict type="erroneous gene model prediction">
        <sequence resource="EMBL-CDS" id="CAB67637"/>
    </conflict>
</comment>
<dbReference type="EMBL" id="AL132977">
    <property type="protein sequence ID" value="CAB67637.1"/>
    <property type="status" value="ALT_SEQ"/>
    <property type="molecule type" value="Genomic_DNA"/>
</dbReference>
<dbReference type="EMBL" id="CP002686">
    <property type="protein sequence ID" value="AEE79740.1"/>
    <property type="molecule type" value="Genomic_DNA"/>
</dbReference>
<dbReference type="EMBL" id="AK117592">
    <property type="protein sequence ID" value="BAC42249.1"/>
    <property type="molecule type" value="mRNA"/>
</dbReference>
<dbReference type="PIR" id="T46031">
    <property type="entry name" value="T46031"/>
</dbReference>
<dbReference type="RefSeq" id="NP_191368.2">
    <molecule id="F4J4N3-1"/>
    <property type="nucleotide sequence ID" value="NM_115671.2"/>
</dbReference>
<dbReference type="SMR" id="F4J4N3"/>
<dbReference type="FunCoup" id="F4J4N3">
    <property type="interactions" value="60"/>
</dbReference>
<dbReference type="STRING" id="3702.F4J4N3"/>
<dbReference type="GlyCosmos" id="F4J4N3">
    <property type="glycosylation" value="1 site, No reported glycans"/>
</dbReference>
<dbReference type="GlyGen" id="F4J4N3">
    <property type="glycosylation" value="1 site"/>
</dbReference>
<dbReference type="PaxDb" id="3702-AT3G58090.1"/>
<dbReference type="ProteomicsDB" id="222147">
    <molecule id="F4J4N3-1"/>
</dbReference>
<dbReference type="EnsemblPlants" id="AT3G58090.1">
    <molecule id="F4J4N3-1"/>
    <property type="protein sequence ID" value="AT3G58090.1"/>
    <property type="gene ID" value="AT3G58090"/>
</dbReference>
<dbReference type="GeneID" id="3769734"/>
<dbReference type="Gramene" id="AT3G58090.1">
    <molecule id="F4J4N3-1"/>
    <property type="protein sequence ID" value="AT3G58090.1"/>
    <property type="gene ID" value="AT3G58090"/>
</dbReference>
<dbReference type="KEGG" id="ath:AT3G58090"/>
<dbReference type="Araport" id="AT3G58090"/>
<dbReference type="TAIR" id="AT3G58090"/>
<dbReference type="eggNOG" id="ENOG502QUX4">
    <property type="taxonomic scope" value="Eukaryota"/>
</dbReference>
<dbReference type="HOGENOM" id="CLU_1027969_0_0_1"/>
<dbReference type="InParanoid" id="F4J4N3"/>
<dbReference type="OMA" id="SADQNNF"/>
<dbReference type="OrthoDB" id="168165at2759"/>
<dbReference type="PRO" id="PR:F4J4N3"/>
<dbReference type="Proteomes" id="UP000006548">
    <property type="component" value="Chromosome 3"/>
</dbReference>
<dbReference type="ExpressionAtlas" id="F4J4N3">
    <property type="expression patterns" value="baseline and differential"/>
</dbReference>
<dbReference type="GO" id="GO:0048046">
    <property type="term" value="C:apoplast"/>
    <property type="evidence" value="ECO:0007669"/>
    <property type="project" value="UniProtKB-SubCell"/>
</dbReference>
<dbReference type="GO" id="GO:0009699">
    <property type="term" value="P:phenylpropanoid biosynthetic process"/>
    <property type="evidence" value="ECO:0007669"/>
    <property type="project" value="UniProtKB-ARBA"/>
</dbReference>
<dbReference type="CDD" id="cd20401">
    <property type="entry name" value="Tudor_AtPTM-like"/>
    <property type="match status" value="1"/>
</dbReference>
<dbReference type="Gene3D" id="2.30.30.140">
    <property type="match status" value="1"/>
</dbReference>
<dbReference type="Gene3D" id="2.40.480.10">
    <property type="entry name" value="Allene oxide cyclase-like"/>
    <property type="match status" value="1"/>
</dbReference>
<dbReference type="InterPro" id="IPR044859">
    <property type="entry name" value="Allene_oxi_cyc_Dirigent"/>
</dbReference>
<dbReference type="InterPro" id="IPR004265">
    <property type="entry name" value="Dirigent"/>
</dbReference>
<dbReference type="InterPro" id="IPR047365">
    <property type="entry name" value="Tudor_AtPTM-like"/>
</dbReference>
<dbReference type="PANTHER" id="PTHR21495">
    <property type="entry name" value="NUCLEOPORIN-RELATED"/>
    <property type="match status" value="1"/>
</dbReference>
<dbReference type="Pfam" id="PF03018">
    <property type="entry name" value="Dirigent"/>
    <property type="match status" value="1"/>
</dbReference>
<dbReference type="Pfam" id="PF21743">
    <property type="entry name" value="PTM_DIR17_Tudor"/>
    <property type="match status" value="1"/>
</dbReference>
<keyword id="KW-0025">Alternative splicing</keyword>
<keyword id="KW-0052">Apoplast</keyword>
<keyword id="KW-0325">Glycoprotein</keyword>
<keyword id="KW-1185">Reference proteome</keyword>
<keyword id="KW-0964">Secreted</keyword>
<gene>
    <name type="primary">DIR17</name>
    <name type="ordered locus">At3g58090</name>
    <name type="ORF">T10K17.300</name>
</gene>
<organism>
    <name type="scientific">Arabidopsis thaliana</name>
    <name type="common">Mouse-ear cress</name>
    <dbReference type="NCBI Taxonomy" id="3702"/>
    <lineage>
        <taxon>Eukaryota</taxon>
        <taxon>Viridiplantae</taxon>
        <taxon>Streptophyta</taxon>
        <taxon>Embryophyta</taxon>
        <taxon>Tracheophyta</taxon>
        <taxon>Spermatophyta</taxon>
        <taxon>Magnoliopsida</taxon>
        <taxon>eudicotyledons</taxon>
        <taxon>Gunneridae</taxon>
        <taxon>Pentapetalae</taxon>
        <taxon>rosids</taxon>
        <taxon>malvids</taxon>
        <taxon>Brassicales</taxon>
        <taxon>Brassicaceae</taxon>
        <taxon>Camelineae</taxon>
        <taxon>Arabidopsis</taxon>
    </lineage>
</organism>
<reference key="1">
    <citation type="journal article" date="2000" name="Nature">
        <title>Sequence and analysis of chromosome 3 of the plant Arabidopsis thaliana.</title>
        <authorList>
            <person name="Salanoubat M."/>
            <person name="Lemcke K."/>
            <person name="Rieger M."/>
            <person name="Ansorge W."/>
            <person name="Unseld M."/>
            <person name="Fartmann B."/>
            <person name="Valle G."/>
            <person name="Bloecker H."/>
            <person name="Perez-Alonso M."/>
            <person name="Obermaier B."/>
            <person name="Delseny M."/>
            <person name="Boutry M."/>
            <person name="Grivell L.A."/>
            <person name="Mache R."/>
            <person name="Puigdomenech P."/>
            <person name="De Simone V."/>
            <person name="Choisne N."/>
            <person name="Artiguenave F."/>
            <person name="Robert C."/>
            <person name="Brottier P."/>
            <person name="Wincker P."/>
            <person name="Cattolico L."/>
            <person name="Weissenbach J."/>
            <person name="Saurin W."/>
            <person name="Quetier F."/>
            <person name="Schaefer M."/>
            <person name="Mueller-Auer S."/>
            <person name="Gabel C."/>
            <person name="Fuchs M."/>
            <person name="Benes V."/>
            <person name="Wurmbach E."/>
            <person name="Drzonek H."/>
            <person name="Erfle H."/>
            <person name="Jordan N."/>
            <person name="Bangert S."/>
            <person name="Wiedelmann R."/>
            <person name="Kranz H."/>
            <person name="Voss H."/>
            <person name="Holland R."/>
            <person name="Brandt P."/>
            <person name="Nyakatura G."/>
            <person name="Vezzi A."/>
            <person name="D'Angelo M."/>
            <person name="Pallavicini A."/>
            <person name="Toppo S."/>
            <person name="Simionati B."/>
            <person name="Conrad A."/>
            <person name="Hornischer K."/>
            <person name="Kauer G."/>
            <person name="Loehnert T.-H."/>
            <person name="Nordsiek G."/>
            <person name="Reichelt J."/>
            <person name="Scharfe M."/>
            <person name="Schoen O."/>
            <person name="Bargues M."/>
            <person name="Terol J."/>
            <person name="Climent J."/>
            <person name="Navarro P."/>
            <person name="Collado C."/>
            <person name="Perez-Perez A."/>
            <person name="Ottenwaelder B."/>
            <person name="Duchemin D."/>
            <person name="Cooke R."/>
            <person name="Laudie M."/>
            <person name="Berger-Llauro C."/>
            <person name="Purnelle B."/>
            <person name="Masuy D."/>
            <person name="de Haan M."/>
            <person name="Maarse A.C."/>
            <person name="Alcaraz J.-P."/>
            <person name="Cottet A."/>
            <person name="Casacuberta E."/>
            <person name="Monfort A."/>
            <person name="Argiriou A."/>
            <person name="Flores M."/>
            <person name="Liguori R."/>
            <person name="Vitale D."/>
            <person name="Mannhaupt G."/>
            <person name="Haase D."/>
            <person name="Schoof H."/>
            <person name="Rudd S."/>
            <person name="Zaccaria P."/>
            <person name="Mewes H.-W."/>
            <person name="Mayer K.F.X."/>
            <person name="Kaul S."/>
            <person name="Town C.D."/>
            <person name="Koo H.L."/>
            <person name="Tallon L.J."/>
            <person name="Jenkins J."/>
            <person name="Rooney T."/>
            <person name="Rizzo M."/>
            <person name="Walts A."/>
            <person name="Utterback T."/>
            <person name="Fujii C.Y."/>
            <person name="Shea T.P."/>
            <person name="Creasy T.H."/>
            <person name="Haas B."/>
            <person name="Maiti R."/>
            <person name="Wu D."/>
            <person name="Peterson J."/>
            <person name="Van Aken S."/>
            <person name="Pai G."/>
            <person name="Militscher J."/>
            <person name="Sellers P."/>
            <person name="Gill J.E."/>
            <person name="Feldblyum T.V."/>
            <person name="Preuss D."/>
            <person name="Lin X."/>
            <person name="Nierman W.C."/>
            <person name="Salzberg S.L."/>
            <person name="White O."/>
            <person name="Venter J.C."/>
            <person name="Fraser C.M."/>
            <person name="Kaneko T."/>
            <person name="Nakamura Y."/>
            <person name="Sato S."/>
            <person name="Kato T."/>
            <person name="Asamizu E."/>
            <person name="Sasamoto S."/>
            <person name="Kimura T."/>
            <person name="Idesawa K."/>
            <person name="Kawashima K."/>
            <person name="Kishida Y."/>
            <person name="Kiyokawa C."/>
            <person name="Kohara M."/>
            <person name="Matsumoto M."/>
            <person name="Matsuno A."/>
            <person name="Muraki A."/>
            <person name="Nakayama S."/>
            <person name="Nakazaki N."/>
            <person name="Shinpo S."/>
            <person name="Takeuchi C."/>
            <person name="Wada T."/>
            <person name="Watanabe A."/>
            <person name="Yamada M."/>
            <person name="Yasuda M."/>
            <person name="Tabata S."/>
        </authorList>
    </citation>
    <scope>NUCLEOTIDE SEQUENCE [LARGE SCALE GENOMIC DNA]</scope>
    <source>
        <strain>cv. Columbia</strain>
    </source>
</reference>
<reference key="2">
    <citation type="journal article" date="2017" name="Plant J.">
        <title>Araport11: a complete reannotation of the Arabidopsis thaliana reference genome.</title>
        <authorList>
            <person name="Cheng C.Y."/>
            <person name="Krishnakumar V."/>
            <person name="Chan A.P."/>
            <person name="Thibaud-Nissen F."/>
            <person name="Schobel S."/>
            <person name="Town C.D."/>
        </authorList>
    </citation>
    <scope>GENOME REANNOTATION</scope>
    <source>
        <strain>cv. Columbia</strain>
    </source>
</reference>
<reference key="3">
    <citation type="journal article" date="2002" name="Science">
        <title>Functional annotation of a full-length Arabidopsis cDNA collection.</title>
        <authorList>
            <person name="Seki M."/>
            <person name="Narusaka M."/>
            <person name="Kamiya A."/>
            <person name="Ishida J."/>
            <person name="Satou M."/>
            <person name="Sakurai T."/>
            <person name="Nakajima M."/>
            <person name="Enju A."/>
            <person name="Akiyama K."/>
            <person name="Oono Y."/>
            <person name="Muramatsu M."/>
            <person name="Hayashizaki Y."/>
            <person name="Kawai J."/>
            <person name="Carninci P."/>
            <person name="Itoh M."/>
            <person name="Ishii Y."/>
            <person name="Arakawa T."/>
            <person name="Shibata K."/>
            <person name="Shinagawa A."/>
            <person name="Shinozaki K."/>
        </authorList>
    </citation>
    <scope>NUCLEOTIDE SEQUENCE [LARGE SCALE MRNA] (ISOFORM 2)</scope>
    <source>
        <strain>cv. Columbia</strain>
    </source>
</reference>
<reference key="4">
    <citation type="journal article" date="2007" name="Phytochemistry">
        <title>Dirigent proteins in conifer defense II: Extended gene discovery, phylogeny, and constitutive and stress-induced gene expression in spruce (Picea spp.).</title>
        <authorList>
            <person name="Ralph S.G."/>
            <person name="Jancsik S."/>
            <person name="Bohlmann J."/>
        </authorList>
    </citation>
    <scope>GENE FAMILY</scope>
    <scope>NOMENCLATURE</scope>
</reference>
<sequence length="271" mass="29897">MEDTGSIKQEAQSHPPGIFEIPGEPAVVINGVPDEPQTDCMIAKDEPISSGTVGSGEWLEGREVRKFFLGRYYSGTVTKFDKQSGWYRVEYEDGDSEDLDWSELEEVLLPLDTKNSNTNAQSEYGEAGQRVNVKAPYPGHKPEKLVTTTVKAPYPGHKPEKLIPLVDDILTVGPEITSEEVGRAQGIFASADQNNFGLLMAFNFVFTKGEFSGSTVSMYGRNPIFSKVREMPIIGGTGAFRFGRGYAQAKTFTFNTTSGNAVVKYNVYIWH</sequence>
<accession>F4J4N3</accession>
<accession>Q8GYI9</accession>
<accession>Q9M2N9</accession>
<feature type="chain" id="PRO_0000422848" description="Dirigent protein 17">
    <location>
        <begin position="1"/>
        <end position="271"/>
    </location>
</feature>
<feature type="region of interest" description="Disordered" evidence="3">
    <location>
        <begin position="1"/>
        <end position="22"/>
    </location>
</feature>
<feature type="compositionally biased region" description="Polar residues" evidence="3">
    <location>
        <begin position="1"/>
        <end position="12"/>
    </location>
</feature>
<feature type="glycosylation site" description="N-linked (GlcNAc...) asparagine" evidence="2">
    <location>
        <position position="255"/>
    </location>
</feature>
<feature type="splice variant" id="VSP_047339" description="In isoform 2." evidence="4">
    <original>MEDTGSIKQEAQSHPPGIFEIPGEPAVVINGVPDEPQTDCMIAKDEPISSGTVGSGEWLEGREVRKFFLGRYYSGTVTKFDKQSGWYRVEYEDGDSEDLDWSELEEVLLPLDTKNSNTNAQSEYGEAGQRVNVKAPYPGHKPEKLVTTTVKAPYPGHKPEKLIPL</original>
    <variation>MVAV</variation>
    <location>
        <begin position="1"/>
        <end position="165"/>
    </location>
</feature>
<evidence type="ECO:0000250" key="1"/>
<evidence type="ECO:0000255" key="2"/>
<evidence type="ECO:0000256" key="3">
    <source>
        <dbReference type="SAM" id="MobiDB-lite"/>
    </source>
</evidence>
<evidence type="ECO:0000303" key="4">
    <source>
    </source>
</evidence>
<evidence type="ECO:0000305" key="5"/>
<name>DIR17_ARATH</name>
<protein>
    <recommendedName>
        <fullName>Dirigent protein 17</fullName>
        <shortName>AtDIR17</shortName>
    </recommendedName>
</protein>
<proteinExistence type="evidence at transcript level"/>